<organism>
    <name type="scientific">Brucella abortus (strain S19)</name>
    <dbReference type="NCBI Taxonomy" id="430066"/>
    <lineage>
        <taxon>Bacteria</taxon>
        <taxon>Pseudomonadati</taxon>
        <taxon>Pseudomonadota</taxon>
        <taxon>Alphaproteobacteria</taxon>
        <taxon>Hyphomicrobiales</taxon>
        <taxon>Brucellaceae</taxon>
        <taxon>Brucella/Ochrobactrum group</taxon>
        <taxon>Brucella</taxon>
    </lineage>
</organism>
<accession>B2SBS5</accession>
<comment type="function">
    <text evidence="1">Probably involved in ribonucleotide reductase function.</text>
</comment>
<comment type="similarity">
    <text evidence="1">Belongs to the NrdI family.</text>
</comment>
<evidence type="ECO:0000255" key="1">
    <source>
        <dbReference type="HAMAP-Rule" id="MF_00128"/>
    </source>
</evidence>
<protein>
    <recommendedName>
        <fullName evidence="1">Protein NrdI</fullName>
    </recommendedName>
</protein>
<feature type="chain" id="PRO_1000095618" description="Protein NrdI">
    <location>
        <begin position="1"/>
        <end position="135"/>
    </location>
</feature>
<reference key="1">
    <citation type="journal article" date="2008" name="PLoS ONE">
        <title>Genome sequence of Brucella abortus vaccine strain S19 compared to virulent strains yields candidate virulence genes.</title>
        <authorList>
            <person name="Crasta O.R."/>
            <person name="Folkerts O."/>
            <person name="Fei Z."/>
            <person name="Mane S.P."/>
            <person name="Evans C."/>
            <person name="Martino-Catt S."/>
            <person name="Bricker B."/>
            <person name="Yu G."/>
            <person name="Du L."/>
            <person name="Sobral B.W."/>
        </authorList>
    </citation>
    <scope>NUCLEOTIDE SEQUENCE [LARGE SCALE GENOMIC DNA]</scope>
    <source>
        <strain>S19</strain>
    </source>
</reference>
<gene>
    <name evidence="1" type="primary">nrdI</name>
    <name type="ordered locus">BAbS19_II08190</name>
</gene>
<sequence>MSLIVYFSSRSGNTHRFVERLGVRSSRIPLEASGALQVREPFVLVTPTYGGGSTKGAVPNPVIRFLNDADNRALIRGVIAAGNSNFGEAFCIAGNIISAKCGVPYLYRFELLGTAEDVGNVRNGMEQFWTRQTQA</sequence>
<name>NRDI_BRUA1</name>
<dbReference type="EMBL" id="CP000888">
    <property type="protein sequence ID" value="ACD74312.1"/>
    <property type="molecule type" value="Genomic_DNA"/>
</dbReference>
<dbReference type="RefSeq" id="WP_002966273.1">
    <property type="nucleotide sequence ID" value="NC_010740.1"/>
</dbReference>
<dbReference type="SMR" id="B2SBS5"/>
<dbReference type="GeneID" id="97535519"/>
<dbReference type="KEGG" id="bmc:BAbS19_II08190"/>
<dbReference type="HOGENOM" id="CLU_114845_0_0_5"/>
<dbReference type="Proteomes" id="UP000002565">
    <property type="component" value="Chromosome 2"/>
</dbReference>
<dbReference type="GO" id="GO:0010181">
    <property type="term" value="F:FMN binding"/>
    <property type="evidence" value="ECO:0007669"/>
    <property type="project" value="InterPro"/>
</dbReference>
<dbReference type="GO" id="GO:0036211">
    <property type="term" value="P:protein modification process"/>
    <property type="evidence" value="ECO:0007669"/>
    <property type="project" value="InterPro"/>
</dbReference>
<dbReference type="Gene3D" id="3.40.50.360">
    <property type="match status" value="1"/>
</dbReference>
<dbReference type="HAMAP" id="MF_00128">
    <property type="entry name" value="NrdI"/>
    <property type="match status" value="1"/>
</dbReference>
<dbReference type="InterPro" id="IPR029039">
    <property type="entry name" value="Flavoprotein-like_sf"/>
</dbReference>
<dbReference type="InterPro" id="IPR020852">
    <property type="entry name" value="RNR_Ib_NrdI_bac"/>
</dbReference>
<dbReference type="InterPro" id="IPR004465">
    <property type="entry name" value="RNR_NrdI"/>
</dbReference>
<dbReference type="NCBIfam" id="TIGR00333">
    <property type="entry name" value="nrdI"/>
    <property type="match status" value="1"/>
</dbReference>
<dbReference type="PANTHER" id="PTHR37297">
    <property type="entry name" value="PROTEIN NRDI"/>
    <property type="match status" value="1"/>
</dbReference>
<dbReference type="PANTHER" id="PTHR37297:SF1">
    <property type="entry name" value="PROTEIN NRDI"/>
    <property type="match status" value="1"/>
</dbReference>
<dbReference type="Pfam" id="PF07972">
    <property type="entry name" value="Flavodoxin_NdrI"/>
    <property type="match status" value="1"/>
</dbReference>
<dbReference type="PIRSF" id="PIRSF005087">
    <property type="entry name" value="NrdI"/>
    <property type="match status" value="1"/>
</dbReference>
<dbReference type="SUPFAM" id="SSF52218">
    <property type="entry name" value="Flavoproteins"/>
    <property type="match status" value="1"/>
</dbReference>
<proteinExistence type="inferred from homology"/>